<name>Y281_HAEIN</name>
<protein>
    <recommendedName>
        <fullName>Putative metabolite transport protein HI_0281</fullName>
    </recommendedName>
</protein>
<keyword id="KW-0997">Cell inner membrane</keyword>
<keyword id="KW-1003">Cell membrane</keyword>
<keyword id="KW-0472">Membrane</keyword>
<keyword id="KW-1185">Reference proteome</keyword>
<keyword id="KW-0812">Transmembrane</keyword>
<keyword id="KW-1133">Transmembrane helix</keyword>
<keyword id="KW-0813">Transport</keyword>
<organism>
    <name type="scientific">Haemophilus influenzae (strain ATCC 51907 / DSM 11121 / KW20 / Rd)</name>
    <dbReference type="NCBI Taxonomy" id="71421"/>
    <lineage>
        <taxon>Bacteria</taxon>
        <taxon>Pseudomonadati</taxon>
        <taxon>Pseudomonadota</taxon>
        <taxon>Gammaproteobacteria</taxon>
        <taxon>Pasteurellales</taxon>
        <taxon>Pasteurellaceae</taxon>
        <taxon>Haemophilus</taxon>
    </lineage>
</organism>
<gene>
    <name type="ordered locus">HI_0281</name>
</gene>
<comment type="subcellular location">
    <subcellularLocation>
        <location evidence="2">Cell inner membrane</location>
        <topology evidence="2">Multi-pass membrane protein</topology>
    </subcellularLocation>
</comment>
<comment type="similarity">
    <text evidence="2">Belongs to the major facilitator superfamily. Sugar transporter (TC 2.A.1.1) family.</text>
</comment>
<accession>P44610</accession>
<evidence type="ECO:0000255" key="1"/>
<evidence type="ECO:0000305" key="2"/>
<feature type="chain" id="PRO_0000050488" description="Putative metabolite transport protein HI_0281">
    <location>
        <begin position="1"/>
        <end position="438"/>
    </location>
</feature>
<feature type="topological domain" description="Cytoplasmic" evidence="1">
    <location>
        <begin position="1"/>
        <end position="17"/>
    </location>
</feature>
<feature type="transmembrane region" description="Helical; Name=1" evidence="1">
    <location>
        <begin position="18"/>
        <end position="38"/>
    </location>
</feature>
<feature type="topological domain" description="Periplasmic" evidence="1">
    <location>
        <begin position="39"/>
        <end position="52"/>
    </location>
</feature>
<feature type="transmembrane region" description="Helical; Name=2" evidence="1">
    <location>
        <begin position="53"/>
        <end position="73"/>
    </location>
</feature>
<feature type="topological domain" description="Cytoplasmic" evidence="1">
    <location>
        <begin position="74"/>
        <end position="85"/>
    </location>
</feature>
<feature type="transmembrane region" description="Helical; Name=3" evidence="1">
    <location>
        <begin position="86"/>
        <end position="106"/>
    </location>
</feature>
<feature type="topological domain" description="Periplasmic" evidence="1">
    <location>
        <begin position="107"/>
        <end position="115"/>
    </location>
</feature>
<feature type="transmembrane region" description="Helical; Name=4" evidence="1">
    <location>
        <begin position="116"/>
        <end position="136"/>
    </location>
</feature>
<feature type="topological domain" description="Cytoplasmic" evidence="1">
    <location>
        <begin position="137"/>
        <end position="156"/>
    </location>
</feature>
<feature type="transmembrane region" description="Helical; Name=5" evidence="1">
    <location>
        <begin position="157"/>
        <end position="177"/>
    </location>
</feature>
<feature type="topological domain" description="Periplasmic" evidence="1">
    <location>
        <begin position="178"/>
        <end position="181"/>
    </location>
</feature>
<feature type="transmembrane region" description="Helical; Name=6" evidence="1">
    <location>
        <begin position="182"/>
        <end position="202"/>
    </location>
</feature>
<feature type="topological domain" description="Cytoplasmic" evidence="1">
    <location>
        <begin position="203"/>
        <end position="239"/>
    </location>
</feature>
<feature type="transmembrane region" description="Helical; Name=7" evidence="1">
    <location>
        <begin position="240"/>
        <end position="260"/>
    </location>
</feature>
<feature type="topological domain" description="Periplasmic" evidence="1">
    <location>
        <begin position="261"/>
        <end position="286"/>
    </location>
</feature>
<feature type="transmembrane region" description="Helical; Name=8" evidence="1">
    <location>
        <begin position="287"/>
        <end position="307"/>
    </location>
</feature>
<feature type="topological domain" description="Cytoplasmic" evidence="1">
    <location>
        <begin position="308"/>
        <end position="314"/>
    </location>
</feature>
<feature type="transmembrane region" description="Helical; Name=9" evidence="1">
    <location>
        <begin position="315"/>
        <end position="336"/>
    </location>
</feature>
<feature type="topological domain" description="Periplasmic" evidence="1">
    <location>
        <begin position="337"/>
        <end position="342"/>
    </location>
</feature>
<feature type="transmembrane region" description="Helical; Name=10" evidence="1">
    <location>
        <begin position="343"/>
        <end position="363"/>
    </location>
</feature>
<feature type="topological domain" description="Cytoplasmic" evidence="1">
    <location>
        <begin position="364"/>
        <end position="377"/>
    </location>
</feature>
<feature type="transmembrane region" description="Helical; Name=11" evidence="1">
    <location>
        <begin position="378"/>
        <end position="398"/>
    </location>
</feature>
<feature type="topological domain" description="Periplasmic" evidence="1">
    <location>
        <begin position="399"/>
        <end position="405"/>
    </location>
</feature>
<feature type="transmembrane region" description="Helical; Name=12" evidence="1">
    <location>
        <begin position="406"/>
        <end position="426"/>
    </location>
</feature>
<feature type="topological domain" description="Cytoplasmic" evidence="1">
    <location>
        <begin position="427"/>
        <end position="438"/>
    </location>
</feature>
<sequence>MSTQLRNNPMKVALASMVGTAIEFFDYYIYAAAAVLVFNTQFFHSDDPLSNDLLSLSTLALAFFARPIGSALFGHFGDKIGRKKTLVASLVLMGGSTVVIGLLPNYAQIGIWAPILLCVCRVGQGIGLGGEWGGAALVATENAPEGKRAWYGTFPQLGAPIGLFVANGTFFLVSYLLGHNALVEWAWRIPFVSSILLVAVGLYVRLTLHESHVFVEAEQKGKKLNAPVSVVFTKHLKPMVIGTFIMVATYSLFYIMTAFAQAYSRTAPKLSEAGYALGLGIPANTFTGLLLISAIVFGIFISISGFYADKIGRRKWLIWVTIAIGVLGLAMPLFLENGTPVSVFAFLVIGMAIMGMTFGPMAALLPELFPTEVRYSGASLAYNLASIIGATIAAMISLKINASFGVMGVGIYLAINALMTFLALLASKETKNVDLTEI</sequence>
<reference key="1">
    <citation type="journal article" date="1995" name="Science">
        <title>Whole-genome random sequencing and assembly of Haemophilus influenzae Rd.</title>
        <authorList>
            <person name="Fleischmann R.D."/>
            <person name="Adams M.D."/>
            <person name="White O."/>
            <person name="Clayton R.A."/>
            <person name="Kirkness E.F."/>
            <person name="Kerlavage A.R."/>
            <person name="Bult C.J."/>
            <person name="Tomb J.-F."/>
            <person name="Dougherty B.A."/>
            <person name="Merrick J.M."/>
            <person name="McKenney K."/>
            <person name="Sutton G.G."/>
            <person name="FitzHugh W."/>
            <person name="Fields C.A."/>
            <person name="Gocayne J.D."/>
            <person name="Scott J.D."/>
            <person name="Shirley R."/>
            <person name="Liu L.-I."/>
            <person name="Glodek A."/>
            <person name="Kelley J.M."/>
            <person name="Weidman J.F."/>
            <person name="Phillips C.A."/>
            <person name="Spriggs T."/>
            <person name="Hedblom E."/>
            <person name="Cotton M.D."/>
            <person name="Utterback T.R."/>
            <person name="Hanna M.C."/>
            <person name="Nguyen D.T."/>
            <person name="Saudek D.M."/>
            <person name="Brandon R.C."/>
            <person name="Fine L.D."/>
            <person name="Fritchman J.L."/>
            <person name="Fuhrmann J.L."/>
            <person name="Geoghagen N.S.M."/>
            <person name="Gnehm C.L."/>
            <person name="McDonald L.A."/>
            <person name="Small K.V."/>
            <person name="Fraser C.M."/>
            <person name="Smith H.O."/>
            <person name="Venter J.C."/>
        </authorList>
    </citation>
    <scope>NUCLEOTIDE SEQUENCE [LARGE SCALE GENOMIC DNA]</scope>
    <source>
        <strain>ATCC 51907 / DSM 11121 / KW20 / Rd</strain>
    </source>
</reference>
<proteinExistence type="inferred from homology"/>
<dbReference type="EMBL" id="L42023">
    <property type="protein sequence ID" value="AAC21944.1"/>
    <property type="molecule type" value="Genomic_DNA"/>
</dbReference>
<dbReference type="PIR" id="A64147">
    <property type="entry name" value="A64147"/>
</dbReference>
<dbReference type="RefSeq" id="NP_438449.1">
    <property type="nucleotide sequence ID" value="NC_000907.1"/>
</dbReference>
<dbReference type="SMR" id="P44610"/>
<dbReference type="STRING" id="71421.HI_0281"/>
<dbReference type="EnsemblBacteria" id="AAC21944">
    <property type="protein sequence ID" value="AAC21944"/>
    <property type="gene ID" value="HI_0281"/>
</dbReference>
<dbReference type="KEGG" id="hin:HI_0281"/>
<dbReference type="PATRIC" id="fig|71421.8.peg.297"/>
<dbReference type="eggNOG" id="COG0477">
    <property type="taxonomic scope" value="Bacteria"/>
</dbReference>
<dbReference type="HOGENOM" id="CLU_001265_39_5_6"/>
<dbReference type="OrthoDB" id="3690818at2"/>
<dbReference type="PhylomeDB" id="P44610"/>
<dbReference type="BioCyc" id="HINF71421:G1GJ1-300-MONOMER"/>
<dbReference type="Proteomes" id="UP000000579">
    <property type="component" value="Chromosome"/>
</dbReference>
<dbReference type="GO" id="GO:0005886">
    <property type="term" value="C:plasma membrane"/>
    <property type="evidence" value="ECO:0007669"/>
    <property type="project" value="UniProtKB-SubCell"/>
</dbReference>
<dbReference type="GO" id="GO:0022857">
    <property type="term" value="F:transmembrane transporter activity"/>
    <property type="evidence" value="ECO:0007669"/>
    <property type="project" value="InterPro"/>
</dbReference>
<dbReference type="CDD" id="cd17369">
    <property type="entry name" value="MFS_ShiA_like"/>
    <property type="match status" value="1"/>
</dbReference>
<dbReference type="FunFam" id="1.20.1250.20:FF:000001">
    <property type="entry name" value="Dicarboxylate MFS transporter"/>
    <property type="match status" value="1"/>
</dbReference>
<dbReference type="Gene3D" id="1.20.1250.20">
    <property type="entry name" value="MFS general substrate transporter like domains"/>
    <property type="match status" value="1"/>
</dbReference>
<dbReference type="InterPro" id="IPR011701">
    <property type="entry name" value="MFS"/>
</dbReference>
<dbReference type="InterPro" id="IPR020846">
    <property type="entry name" value="MFS_dom"/>
</dbReference>
<dbReference type="InterPro" id="IPR036259">
    <property type="entry name" value="MFS_trans_sf"/>
</dbReference>
<dbReference type="InterPro" id="IPR004736">
    <property type="entry name" value="MHS_symport"/>
</dbReference>
<dbReference type="InterPro" id="IPR005829">
    <property type="entry name" value="Sugar_transporter_CS"/>
</dbReference>
<dbReference type="NCBIfam" id="TIGR00883">
    <property type="entry name" value="2A0106"/>
    <property type="match status" value="1"/>
</dbReference>
<dbReference type="PANTHER" id="PTHR43045:SF2">
    <property type="entry name" value="INNER MEMBRANE METABOLITE TRANSPORT PROTEIN YHJE"/>
    <property type="match status" value="1"/>
</dbReference>
<dbReference type="PANTHER" id="PTHR43045">
    <property type="entry name" value="SHIKIMATE TRANSPORTER"/>
    <property type="match status" value="1"/>
</dbReference>
<dbReference type="Pfam" id="PF07690">
    <property type="entry name" value="MFS_1"/>
    <property type="match status" value="1"/>
</dbReference>
<dbReference type="SUPFAM" id="SSF103473">
    <property type="entry name" value="MFS general substrate transporter"/>
    <property type="match status" value="1"/>
</dbReference>
<dbReference type="PROSITE" id="PS50850">
    <property type="entry name" value="MFS"/>
    <property type="match status" value="1"/>
</dbReference>
<dbReference type="PROSITE" id="PS00216">
    <property type="entry name" value="SUGAR_TRANSPORT_1"/>
    <property type="match status" value="1"/>
</dbReference>